<reference key="1">
    <citation type="journal article" date="2004" name="J. Biochem.">
        <title>Novel prolyl tri/tetra-peptidyl aminopeptidase from Streptomyces mobaraensis: substrate specificity and enzyme gene cloning.</title>
        <authorList>
            <person name="Umezawa Y."/>
            <person name="Yokoyama K."/>
            <person name="Kikuchi Y."/>
            <person name="Date M."/>
            <person name="Ito K."/>
            <person name="Yoshimoto T."/>
            <person name="Matsui H."/>
        </authorList>
    </citation>
    <scope>NUCLEOTIDE SEQUENCE [GENOMIC DNA]</scope>
    <scope>PROTEIN SEQUENCE OF 34-53</scope>
    <scope>FUNCTION</scope>
    <scope>ACTIVITY REGULATION</scope>
    <scope>BIOPHYSICOCHEMICAL PROPERTIES</scope>
    <scope>SUBCELLULAR LOCATION</scope>
    <source>
        <strain>ATCC 29032 / CBS 199.75 / DSM 40847 / NBRC 13819 / NCIMB 11159 / NRRL B-3729 / VKM Ac-928</strain>
    </source>
</reference>
<reference key="2">
    <citation type="submission" date="2013-04" db="EMBL/GenBank/DDBJ databases">
        <title>Confirmation of the genes coding a transglutaminase and a prolyl tri/tetrapeptidyl aminopeptidase from Streptomyces mobaraensis.</title>
        <authorList>
            <person name="Zindel S."/>
            <person name="Froels S."/>
            <person name="Kletzin A."/>
            <person name="Pfeifer F."/>
            <person name="Fuchsbauer H.L."/>
        </authorList>
    </citation>
    <scope>NUCLEOTIDE SEQUENCE [GENOMIC DNA]</scope>
    <source>
        <strain>ATCC 29032 / CBS 199.75 / DSM 40847 / NBRC 13819 / NCIMB 11159 / NRRL B-3729 / VKM Ac-928</strain>
    </source>
</reference>
<reference key="3">
    <citation type="journal article" date="2003" name="Eur. J. Biochem.">
        <title>Activated transglutaminase from Streptomyces mobaraensis is processed by a tripeptidyl aminopeptidase in the final step.</title>
        <authorList>
            <person name="Zotzel J."/>
            <person name="Pasternack R."/>
            <person name="Pelzer C."/>
            <person name="Ziegert D."/>
            <person name="Mainusch M."/>
            <person name="Fuchsbauer H.-L."/>
        </authorList>
    </citation>
    <scope>PROTEIN SEQUENCE OF 34-68</scope>
    <scope>FUNCTION</scope>
    <scope>ACTIVITY REGULATION</scope>
    <scope>BIOPHYSICOCHEMICAL PROPERTIES</scope>
    <scope>SUBCELLULAR LOCATION</scope>
    <source>
        <strain>ATCC 27441 / CBS 777.72 / DSM 40587 / JCM 4778 / NBRC 13476 / VKM Ac-879</strain>
    </source>
</reference>
<sequence length="477" mass="53702">MRKALRSLLAASMLIGAIGAGSATAEAASITAPQADIKDRILKIPGMKFVEEKPYQGYRYLVMTYRQPVDHRNPGKGTFEQRFTLLHKDTDRPTVFFTSGYNVSTNPSRSEPTRIVDGNQVSMEYRFFTPSRPQPADWSKLDIWQAASDQHRLYQALKPVYGKNWLATGGSKGGMTATYFRRFYPNDMNGTVAYVAPNDVNDKEDSAYDKFFQNVGDKACRTQLNSVQREALVRRDEIVARYEKWAKENGKTFKVVGSADKAYENVVLDLVWSFWQYHLQSDCASVPATKASTDELYKFIDDISGFDGYTDQGLERFTPYYYQAGTQLGAPTVKNPHLKGVLRYPGINQPRSYVPRDIPMTFRPGAMADVDRWVREDSRNMLFVYGQNDPWSGEPFRLGKGAAARHDYRFYAPGGNHGSNIAQLVADERAKATAEVLKWAGVAPQAVQKDEKAAKPLAPFDAKLDRVKNDKQSALRP</sequence>
<proteinExistence type="evidence at protein level"/>
<organism evidence="5">
    <name type="scientific">Streptomyces mobaraensis</name>
    <name type="common">Streptoverticillium mobaraense</name>
    <dbReference type="NCBI Taxonomy" id="35621"/>
    <lineage>
        <taxon>Bacteria</taxon>
        <taxon>Bacillati</taxon>
        <taxon>Actinomycetota</taxon>
        <taxon>Actinomycetes</taxon>
        <taxon>Kitasatosporales</taxon>
        <taxon>Streptomycetaceae</taxon>
        <taxon>Streptomyces</taxon>
    </lineage>
</organism>
<evidence type="ECO:0000255" key="1"/>
<evidence type="ECO:0000256" key="2">
    <source>
        <dbReference type="SAM" id="MobiDB-lite"/>
    </source>
</evidence>
<evidence type="ECO:0000269" key="3">
    <source>
    </source>
</evidence>
<evidence type="ECO:0000269" key="4">
    <source>
    </source>
</evidence>
<evidence type="ECO:0000305" key="5"/>
<gene>
    <name type="primary">ptp</name>
</gene>
<name>TPAP_STRMB</name>
<keyword id="KW-0031">Aminopeptidase</keyword>
<keyword id="KW-0903">Direct protein sequencing</keyword>
<keyword id="KW-0378">Hydrolase</keyword>
<keyword id="KW-0645">Protease</keyword>
<keyword id="KW-0964">Secreted</keyword>
<keyword id="KW-0732">Signal</keyword>
<feature type="signal peptide" evidence="1">
    <location>
        <begin position="1"/>
        <end position="27"/>
    </location>
</feature>
<feature type="propeptide" id="PRO_0000401059" evidence="3 4">
    <location>
        <begin position="28"/>
        <end position="33"/>
    </location>
</feature>
<feature type="chain" id="PRO_0000072645" description="Prolyl tri/tetrapeptidyl aminopeptidase">
    <location>
        <begin position="34"/>
        <end position="477"/>
    </location>
</feature>
<feature type="region of interest" description="Disordered" evidence="2">
    <location>
        <begin position="448"/>
        <end position="477"/>
    </location>
</feature>
<feature type="compositionally biased region" description="Basic and acidic residues" evidence="2">
    <location>
        <begin position="462"/>
        <end position="477"/>
    </location>
</feature>
<protein>
    <recommendedName>
        <fullName>Prolyl tri/tetrapeptidyl aminopeptidase</fullName>
        <shortName>PTP-SM</shortName>
        <ecNumber>3.4.11.-</ecNumber>
    </recommendedName>
    <alternativeName>
        <fullName>Tripeptidyl aminopeptidase</fullName>
        <shortName>SM-TAP</shortName>
    </alternativeName>
</protein>
<comment type="function">
    <text evidence="3 4">Has proline-specific tripeptidyl aminopeptidase and tetrapeptidyl aminopeptidase activity. Activity is highest against tripeptides containing an Ala-Pro motif. Involved in the final processing of transglutaminase, by removing either the tetrapeptide Phe-Arg-Ala-Pro left after TAMEP or SAM-P45 hydrolysis, or the tripeptide Arg-Ala-Pro left after SGMP II hydrolysis in a single step.</text>
</comment>
<comment type="activity regulation">
    <text evidence="3 4">Completely inhibited by the serine protease inhibitor phenylmethylsulfonyl fluoride. Partially inhibited by the serine protease inhibitor Pefabloc. Not inhibited by cysteine proteinase-specific or metalloproteinase-specific inhibitors. Not inhibited by prolinal or its derivatives. EDTA and EGTA both partially inhibit this enzyme (PubMed:14519127). EDTA has no effect on activity (PubMed:15598885).</text>
</comment>
<comment type="biophysicochemical properties">
    <kinetics>
        <KM evidence="3 4">0.072 mM for Gly-Ala-Pro-BNA</KM>
        <KM evidence="3 4">0.26 mM for Gly-Ala-Gly-Pro-BNA</KM>
    </kinetics>
    <phDependence>
        <text evidence="3 4">Optimum pH is 7.0-7.5 (PubMed:14519127). Optimum pH is 6.0-6.5 (PubMed:15598885). Active between pH 4.3 and 8.3. Stable after 12 hours incubation from pH 4.0 to 9.0.</text>
    </phDependence>
    <temperatureDependence>
        <text evidence="3 4">Optimum temperature is 45 degrees Celsius.</text>
    </temperatureDependence>
</comment>
<comment type="subcellular location">
    <subcellularLocation>
        <location evidence="5">Secreted</location>
    </subcellularLocation>
    <subcellularLocation>
        <location>Cell surface</location>
    </subcellularLocation>
    <text evidence="3 4">Secreted (PubMed:14519127). Cell surface (PubMed:15598885).</text>
</comment>
<comment type="similarity">
    <text evidence="5">Belongs to the peptidase S37 family.</text>
</comment>
<accession>P83615</accession>
<accession>N1NSS3</accession>
<accession>Q6F4C4</accession>
<dbReference type="EC" id="3.4.11.-"/>
<dbReference type="EMBL" id="AB159671">
    <property type="protein sequence ID" value="BAD30013.1"/>
    <property type="molecule type" value="Genomic_DNA"/>
</dbReference>
<dbReference type="EMBL" id="HF968463">
    <property type="protein sequence ID" value="CCW72545.1"/>
    <property type="molecule type" value="Genomic_DNA"/>
</dbReference>
<dbReference type="RefSeq" id="WP_004943027.1">
    <property type="nucleotide sequence ID" value="NZ_VOKX01000009.1"/>
</dbReference>
<dbReference type="SMR" id="P83615"/>
<dbReference type="ESTHER" id="strmb-tpap">
    <property type="family name" value="Peptidase_S37"/>
</dbReference>
<dbReference type="MEROPS" id="S37.001"/>
<dbReference type="OrthoDB" id="3979391at2"/>
<dbReference type="GO" id="GO:0009986">
    <property type="term" value="C:cell surface"/>
    <property type="evidence" value="ECO:0007669"/>
    <property type="project" value="UniProtKB-SubCell"/>
</dbReference>
<dbReference type="GO" id="GO:0005576">
    <property type="term" value="C:extracellular region"/>
    <property type="evidence" value="ECO:0007669"/>
    <property type="project" value="UniProtKB-SubCell"/>
</dbReference>
<dbReference type="GO" id="GO:0004177">
    <property type="term" value="F:aminopeptidase activity"/>
    <property type="evidence" value="ECO:0007669"/>
    <property type="project" value="UniProtKB-KW"/>
</dbReference>
<dbReference type="GO" id="GO:0008239">
    <property type="term" value="F:dipeptidyl-peptidase activity"/>
    <property type="evidence" value="ECO:0007669"/>
    <property type="project" value="TreeGrafter"/>
</dbReference>
<dbReference type="GO" id="GO:0006508">
    <property type="term" value="P:proteolysis"/>
    <property type="evidence" value="ECO:0007669"/>
    <property type="project" value="UniProtKB-KW"/>
</dbReference>
<dbReference type="Gene3D" id="3.40.50.1820">
    <property type="entry name" value="alpha/beta hydrolase"/>
    <property type="match status" value="1"/>
</dbReference>
<dbReference type="InterPro" id="IPR029058">
    <property type="entry name" value="AB_hydrolase_fold"/>
</dbReference>
<dbReference type="InterPro" id="IPR008761">
    <property type="entry name" value="Peptidase_S37"/>
</dbReference>
<dbReference type="PANTHER" id="PTHR11010:SF38">
    <property type="entry name" value="LYSOSOMAL PRO-X CARBOXYPEPTIDASE"/>
    <property type="match status" value="1"/>
</dbReference>
<dbReference type="PANTHER" id="PTHR11010">
    <property type="entry name" value="PROTEASE S28 PRO-X CARBOXYPEPTIDASE-RELATED"/>
    <property type="match status" value="1"/>
</dbReference>
<dbReference type="Pfam" id="PF05576">
    <property type="entry name" value="Peptidase_S37"/>
    <property type="match status" value="1"/>
</dbReference>
<dbReference type="SUPFAM" id="SSF53474">
    <property type="entry name" value="alpha/beta-Hydrolases"/>
    <property type="match status" value="1"/>
</dbReference>